<protein>
    <recommendedName>
        <fullName>Antigen peptide transporter 1</fullName>
        <shortName>APT1</shortName>
        <ecNumber evidence="10 20 21">7.4.2.14</ecNumber>
    </recommendedName>
    <alternativeName>
        <fullName>ATP-binding cassette sub-family B member 2</fullName>
    </alternativeName>
    <alternativeName>
        <fullName evidence="38">Peptide supply factor 1</fullName>
    </alternativeName>
    <alternativeName>
        <fullName>Peptide transporter PSF1</fullName>
        <shortName evidence="38">PSF-1</shortName>
    </alternativeName>
    <alternativeName>
        <fullName>Peptide transporter TAP1</fullName>
    </alternativeName>
    <alternativeName>
        <fullName>Peptide transporter involved in antigen processing 1</fullName>
    </alternativeName>
    <alternativeName>
        <fullName>Really interesting new gene 4 protein</fullName>
        <shortName evidence="37">RING4</shortName>
    </alternativeName>
</protein>
<dbReference type="EC" id="7.4.2.14" evidence="10 20 21"/>
<dbReference type="EMBL" id="X57522">
    <property type="protein sequence ID" value="CAA40741.1"/>
    <property type="molecule type" value="mRNA"/>
</dbReference>
<dbReference type="EMBL" id="X66401">
    <property type="protein sequence ID" value="CAA47025.1"/>
    <property type="status" value="ALT_INIT"/>
    <property type="molecule type" value="Genomic_DNA"/>
</dbReference>
<dbReference type="EMBL" id="X87344">
    <property type="protein sequence ID" value="CAA60785.1"/>
    <property type="status" value="ALT_INIT"/>
    <property type="molecule type" value="Genomic_DNA"/>
</dbReference>
<dbReference type="EMBL" id="AL669918">
    <property type="status" value="NOT_ANNOTATED_CDS"/>
    <property type="molecule type" value="Genomic_DNA"/>
</dbReference>
<dbReference type="EMBL" id="AL671681">
    <property type="status" value="NOT_ANNOTATED_CDS"/>
    <property type="molecule type" value="Genomic_DNA"/>
</dbReference>
<dbReference type="EMBL" id="AL935043">
    <property type="status" value="NOT_ANNOTATED_CDS"/>
    <property type="molecule type" value="Genomic_DNA"/>
</dbReference>
<dbReference type="EMBL" id="BX927138">
    <property type="status" value="NOT_ANNOTATED_CDS"/>
    <property type="molecule type" value="Genomic_DNA"/>
</dbReference>
<dbReference type="EMBL" id="CR762476">
    <property type="status" value="NOT_ANNOTATED_CDS"/>
    <property type="molecule type" value="Genomic_DNA"/>
</dbReference>
<dbReference type="EMBL" id="CR933844">
    <property type="status" value="NOT_ANNOTATED_CDS"/>
    <property type="molecule type" value="Genomic_DNA"/>
</dbReference>
<dbReference type="EMBL" id="CR753889">
    <property type="status" value="NOT_ANNOTATED_CDS"/>
    <property type="molecule type" value="Genomic_DNA"/>
</dbReference>
<dbReference type="EMBL" id="CH471081">
    <property type="protein sequence ID" value="EAX03647.1"/>
    <property type="molecule type" value="Genomic_DNA"/>
</dbReference>
<dbReference type="EMBL" id="BC014081">
    <property type="protein sequence ID" value="AAH14081.1"/>
    <property type="molecule type" value="mRNA"/>
</dbReference>
<dbReference type="EMBL" id="L21204">
    <property type="protein sequence ID" value="AAC12902.1"/>
    <property type="molecule type" value="mRNA"/>
</dbReference>
<dbReference type="EMBL" id="L21205">
    <property type="protein sequence ID" value="AAC12903.1"/>
    <property type="molecule type" value="mRNA"/>
</dbReference>
<dbReference type="EMBL" id="L21206">
    <property type="protein sequence ID" value="AAC12904.1"/>
    <property type="molecule type" value="mRNA"/>
</dbReference>
<dbReference type="EMBL" id="L21207">
    <property type="protein sequence ID" value="AAC12905.1"/>
    <property type="molecule type" value="mRNA"/>
</dbReference>
<dbReference type="EMBL" id="L21208">
    <property type="protein sequence ID" value="AAC12906.1"/>
    <property type="molecule type" value="mRNA"/>
</dbReference>
<dbReference type="EMBL" id="X57521">
    <property type="protein sequence ID" value="CAA40740.1"/>
    <property type="molecule type" value="mRNA"/>
</dbReference>
<dbReference type="EMBL" id="S70274">
    <property type="protein sequence ID" value="AAD14056.1"/>
    <property type="molecule type" value="mRNA"/>
</dbReference>
<dbReference type="CCDS" id="CCDS4758.2">
    <molecule id="Q03518-1"/>
</dbReference>
<dbReference type="PIR" id="S13427">
    <property type="entry name" value="A41538"/>
</dbReference>
<dbReference type="RefSeq" id="NP_000584.2">
    <molecule id="Q03518-1"/>
    <property type="nucleotide sequence ID" value="NM_000593.5"/>
</dbReference>
<dbReference type="RefSeq" id="NP_001278951.1">
    <property type="nucleotide sequence ID" value="NM_001292022.1"/>
</dbReference>
<dbReference type="PDB" id="1JJ7">
    <property type="method" value="X-ray"/>
    <property type="resolution" value="2.40 A"/>
    <property type="chains" value="A=489-748"/>
</dbReference>
<dbReference type="PDB" id="5U1D">
    <property type="method" value="EM"/>
    <property type="resolution" value="3.97 A"/>
    <property type="chains" value="A=1-748"/>
</dbReference>
<dbReference type="PDB" id="8T46">
    <property type="method" value="EM"/>
    <property type="resolution" value="3.60 A"/>
    <property type="chains" value="A=1-748"/>
</dbReference>
<dbReference type="PDB" id="8T4E">
    <property type="method" value="EM"/>
    <property type="resolution" value="3.50 A"/>
    <property type="chains" value="A=1-748"/>
</dbReference>
<dbReference type="PDB" id="8T4F">
    <property type="method" value="EM"/>
    <property type="resolution" value="3.50 A"/>
    <property type="chains" value="A=1-748"/>
</dbReference>
<dbReference type="PDB" id="8T4G">
    <property type="method" value="EM"/>
    <property type="resolution" value="3.50 A"/>
    <property type="chains" value="A=1-748"/>
</dbReference>
<dbReference type="PDB" id="8T4H">
    <property type="method" value="EM"/>
    <property type="resolution" value="3.80 A"/>
    <property type="chains" value="A=1-748"/>
</dbReference>
<dbReference type="PDB" id="8T4I">
    <property type="method" value="EM"/>
    <property type="resolution" value="5.10 A"/>
    <property type="chains" value="A=1-748"/>
</dbReference>
<dbReference type="PDB" id="8T4J">
    <property type="method" value="EM"/>
    <property type="resolution" value="3.90 A"/>
    <property type="chains" value="A=1-748"/>
</dbReference>
<dbReference type="PDBsum" id="1JJ7"/>
<dbReference type="PDBsum" id="5U1D"/>
<dbReference type="PDBsum" id="8T46"/>
<dbReference type="PDBsum" id="8T4E"/>
<dbReference type="PDBsum" id="8T4F"/>
<dbReference type="PDBsum" id="8T4G"/>
<dbReference type="PDBsum" id="8T4H"/>
<dbReference type="PDBsum" id="8T4I"/>
<dbReference type="PDBsum" id="8T4J"/>
<dbReference type="EMDB" id="EMD-41021"/>
<dbReference type="EMDB" id="EMD-41028"/>
<dbReference type="EMDB" id="EMD-41029"/>
<dbReference type="EMDB" id="EMD-41030"/>
<dbReference type="EMDB" id="EMD-41031"/>
<dbReference type="EMDB" id="EMD-41032"/>
<dbReference type="EMDB" id="EMD-41033"/>
<dbReference type="EMDB" id="EMD-8482"/>
<dbReference type="SMR" id="Q03518"/>
<dbReference type="BioGRID" id="112753">
    <property type="interactions" value="176"/>
</dbReference>
<dbReference type="CORUM" id="Q03518"/>
<dbReference type="DIP" id="DIP-35626N"/>
<dbReference type="FunCoup" id="Q03518">
    <property type="interactions" value="515"/>
</dbReference>
<dbReference type="IntAct" id="Q03518">
    <property type="interactions" value="117"/>
</dbReference>
<dbReference type="MINT" id="Q03518"/>
<dbReference type="STRING" id="9606.ENSP00000346206"/>
<dbReference type="ChEMBL" id="CHEMBL4523275"/>
<dbReference type="DrugBank" id="DB01259">
    <property type="generic name" value="Lapatinib"/>
</dbReference>
<dbReference type="TCDB" id="3.A.1.209.1">
    <property type="family name" value="the atp-binding cassette (abc) superfamily"/>
</dbReference>
<dbReference type="GlyGen" id="Q03518">
    <property type="glycosylation" value="1 site, 1 O-linked glycan (1 site)"/>
</dbReference>
<dbReference type="iPTMnet" id="Q03518"/>
<dbReference type="MetOSite" id="Q03518"/>
<dbReference type="PhosphoSitePlus" id="Q03518"/>
<dbReference type="SwissPalm" id="Q03518"/>
<dbReference type="BioMuta" id="TAP1"/>
<dbReference type="DMDM" id="215273957"/>
<dbReference type="jPOST" id="Q03518"/>
<dbReference type="MassIVE" id="Q03518"/>
<dbReference type="PaxDb" id="9606-ENSP00000346206"/>
<dbReference type="PeptideAtlas" id="Q03518"/>
<dbReference type="ProteomicsDB" id="58214"/>
<dbReference type="Pumba" id="Q03518"/>
<dbReference type="Antibodypedia" id="4017">
    <property type="antibodies" value="335 antibodies from 39 providers"/>
</dbReference>
<dbReference type="CPTC" id="Q03518">
    <property type="antibodies" value="1 antibody"/>
</dbReference>
<dbReference type="DNASU" id="6890"/>
<dbReference type="Ensembl" id="ENST00000354258.5">
    <molecule id="Q03518-1"/>
    <property type="protein sequence ID" value="ENSP00000346206.5"/>
    <property type="gene ID" value="ENSG00000168394.13"/>
</dbReference>
<dbReference type="Ensembl" id="ENST00000383235.4">
    <molecule id="Q03518-2"/>
    <property type="protein sequence ID" value="ENSP00000372722.4"/>
    <property type="gene ID" value="ENSG00000206297.7"/>
</dbReference>
<dbReference type="Ensembl" id="ENST00000414467.2">
    <molecule id="Q03518-2"/>
    <property type="protein sequence ID" value="ENSP00000405356.2"/>
    <property type="gene ID" value="ENSG00000226173.4"/>
</dbReference>
<dbReference type="Ensembl" id="ENST00000418205.2">
    <molecule id="Q03518-2"/>
    <property type="protein sequence ID" value="ENSP00000401149.2"/>
    <property type="gene ID" value="ENSG00000227816.4"/>
</dbReference>
<dbReference type="Ensembl" id="ENST00000424897.2">
    <molecule id="Q03518-2"/>
    <property type="protein sequence ID" value="ENSP00000413080.2"/>
    <property type="gene ID" value="ENSG00000230705.4"/>
</dbReference>
<dbReference type="Ensembl" id="ENST00000439781.2">
    <molecule id="Q03518-2"/>
    <property type="protein sequence ID" value="ENSP00000415660.2"/>
    <property type="gene ID" value="ENSG00000224212.4"/>
</dbReference>
<dbReference type="Ensembl" id="ENST00000440894.2">
    <molecule id="Q03518-2"/>
    <property type="protein sequence ID" value="ENSP00000402316.2"/>
    <property type="gene ID" value="ENSG00000232367.5"/>
</dbReference>
<dbReference type="GeneID" id="6890"/>
<dbReference type="KEGG" id="hsa:6890"/>
<dbReference type="MANE-Select" id="ENST00000354258.5">
    <property type="protein sequence ID" value="ENSP00000346206.5"/>
    <property type="RefSeq nucleotide sequence ID" value="NM_000593.6"/>
    <property type="RefSeq protein sequence ID" value="NP_000584.3"/>
</dbReference>
<dbReference type="UCSC" id="uc003ocg.4">
    <molecule id="Q03518-1"/>
    <property type="organism name" value="human"/>
</dbReference>
<dbReference type="AGR" id="HGNC:43"/>
<dbReference type="CTD" id="6890"/>
<dbReference type="DisGeNET" id="6890"/>
<dbReference type="GeneCards" id="TAP1"/>
<dbReference type="HGNC" id="HGNC:43">
    <property type="gene designation" value="TAP1"/>
</dbReference>
<dbReference type="HPA" id="ENSG00000168394">
    <property type="expression patterns" value="Low tissue specificity"/>
</dbReference>
<dbReference type="MalaCards" id="TAP1"/>
<dbReference type="MIM" id="170260">
    <property type="type" value="gene"/>
</dbReference>
<dbReference type="MIM" id="604571">
    <property type="type" value="phenotype"/>
</dbReference>
<dbReference type="neXtProt" id="NX_Q03518"/>
<dbReference type="OpenTargets" id="ENSG00000168394"/>
<dbReference type="Orphanet" id="34592">
    <property type="disease" value="Immunodeficiency by defective expression of MHC class I"/>
</dbReference>
<dbReference type="PharmGKB" id="PA35021"/>
<dbReference type="VEuPathDB" id="HostDB:ENSG00000168394"/>
<dbReference type="eggNOG" id="KOG0058">
    <property type="taxonomic scope" value="Eukaryota"/>
</dbReference>
<dbReference type="GeneTree" id="ENSGT00940000159023"/>
<dbReference type="HOGENOM" id="CLU_000604_84_3_1"/>
<dbReference type="InParanoid" id="Q03518"/>
<dbReference type="OMA" id="LTMPLMD"/>
<dbReference type="OrthoDB" id="6500128at2759"/>
<dbReference type="PAN-GO" id="Q03518">
    <property type="GO annotations" value="8 GO annotations based on evolutionary models"/>
</dbReference>
<dbReference type="PhylomeDB" id="Q03518"/>
<dbReference type="TreeFam" id="TF105197"/>
<dbReference type="BRENDA" id="7.4.2.14">
    <property type="organism ID" value="2681"/>
</dbReference>
<dbReference type="BRENDA" id="7.4.2.5">
    <property type="organism ID" value="2681"/>
</dbReference>
<dbReference type="PathwayCommons" id="Q03518"/>
<dbReference type="Reactome" id="R-HSA-1236974">
    <property type="pathway name" value="ER-Phagosome pathway"/>
</dbReference>
<dbReference type="Reactome" id="R-HSA-983170">
    <property type="pathway name" value="Antigen Presentation: Folding, assembly and peptide loading of class I MHC"/>
</dbReference>
<dbReference type="SignaLink" id="Q03518"/>
<dbReference type="SIGNOR" id="Q03518"/>
<dbReference type="BioGRID-ORCS" id="6890">
    <property type="hits" value="23 hits in 1165 CRISPR screens"/>
</dbReference>
<dbReference type="CD-CODE" id="804901D1">
    <property type="entry name" value="Nuclear speckle"/>
</dbReference>
<dbReference type="ChiTaRS" id="TAP1">
    <property type="organism name" value="human"/>
</dbReference>
<dbReference type="EvolutionaryTrace" id="Q03518"/>
<dbReference type="GeneWiki" id="TAP1"/>
<dbReference type="GenomeRNAi" id="6890"/>
<dbReference type="Pharos" id="Q03518">
    <property type="development level" value="Tbio"/>
</dbReference>
<dbReference type="PRO" id="PR:Q03518"/>
<dbReference type="Proteomes" id="UP000005640">
    <property type="component" value="Chromosome 6"/>
</dbReference>
<dbReference type="RNAct" id="Q03518">
    <property type="molecule type" value="protein"/>
</dbReference>
<dbReference type="Bgee" id="ENSG00000168394">
    <property type="expression patterns" value="Expressed in granulocyte and 99 other cell types or tissues"/>
</dbReference>
<dbReference type="ExpressionAtlas" id="Q03518">
    <property type="expression patterns" value="baseline and differential"/>
</dbReference>
<dbReference type="GO" id="GO:0034451">
    <property type="term" value="C:centriolar satellite"/>
    <property type="evidence" value="ECO:0000314"/>
    <property type="project" value="HPA"/>
</dbReference>
<dbReference type="GO" id="GO:0005783">
    <property type="term" value="C:endoplasmic reticulum"/>
    <property type="evidence" value="ECO:0000314"/>
    <property type="project" value="HPA"/>
</dbReference>
<dbReference type="GO" id="GO:0005789">
    <property type="term" value="C:endoplasmic reticulum membrane"/>
    <property type="evidence" value="ECO:0000314"/>
    <property type="project" value="UniProtKB"/>
</dbReference>
<dbReference type="GO" id="GO:0033116">
    <property type="term" value="C:endoplasmic reticulum-Golgi intermediate compartment membrane"/>
    <property type="evidence" value="ECO:0000304"/>
    <property type="project" value="Reactome"/>
</dbReference>
<dbReference type="GO" id="GO:0016020">
    <property type="term" value="C:membrane"/>
    <property type="evidence" value="ECO:0000314"/>
    <property type="project" value="UniProtKB"/>
</dbReference>
<dbReference type="GO" id="GO:0042824">
    <property type="term" value="C:MHC class I peptide loading complex"/>
    <property type="evidence" value="ECO:0000314"/>
    <property type="project" value="UniProtKB"/>
</dbReference>
<dbReference type="GO" id="GO:0030670">
    <property type="term" value="C:phagocytic vesicle membrane"/>
    <property type="evidence" value="ECO:0000304"/>
    <property type="project" value="Reactome"/>
</dbReference>
<dbReference type="GO" id="GO:0042825">
    <property type="term" value="C:TAP complex"/>
    <property type="evidence" value="ECO:0000314"/>
    <property type="project" value="UniProtKB"/>
</dbReference>
<dbReference type="GO" id="GO:0015433">
    <property type="term" value="F:ABC-type peptide antigen transporter activity"/>
    <property type="evidence" value="ECO:0000314"/>
    <property type="project" value="UniProtKB"/>
</dbReference>
<dbReference type="GO" id="GO:0043531">
    <property type="term" value="F:ADP binding"/>
    <property type="evidence" value="ECO:0000314"/>
    <property type="project" value="UniProtKB"/>
</dbReference>
<dbReference type="GO" id="GO:0005524">
    <property type="term" value="F:ATP binding"/>
    <property type="evidence" value="ECO:0000314"/>
    <property type="project" value="UniProtKB"/>
</dbReference>
<dbReference type="GO" id="GO:0016887">
    <property type="term" value="F:ATP hydrolysis activity"/>
    <property type="evidence" value="ECO:0007669"/>
    <property type="project" value="InterPro"/>
</dbReference>
<dbReference type="GO" id="GO:0046872">
    <property type="term" value="F:metal ion binding"/>
    <property type="evidence" value="ECO:0007669"/>
    <property type="project" value="UniProtKB-KW"/>
</dbReference>
<dbReference type="GO" id="GO:0042288">
    <property type="term" value="F:MHC class I protein binding"/>
    <property type="evidence" value="ECO:0007669"/>
    <property type="project" value="Ensembl"/>
</dbReference>
<dbReference type="GO" id="GO:0023029">
    <property type="term" value="F:MHC class Ib protein binding"/>
    <property type="evidence" value="ECO:0000353"/>
    <property type="project" value="UniProtKB"/>
</dbReference>
<dbReference type="GO" id="GO:0042605">
    <property type="term" value="F:peptide antigen binding"/>
    <property type="evidence" value="ECO:0000314"/>
    <property type="project" value="UniProtKB"/>
</dbReference>
<dbReference type="GO" id="GO:1904680">
    <property type="term" value="F:peptide transmembrane transporter activity"/>
    <property type="evidence" value="ECO:0000315"/>
    <property type="project" value="UniProt"/>
</dbReference>
<dbReference type="GO" id="GO:0042803">
    <property type="term" value="F:protein homodimerization activity"/>
    <property type="evidence" value="ECO:0000250"/>
    <property type="project" value="UniProtKB"/>
</dbReference>
<dbReference type="GO" id="GO:0046978">
    <property type="term" value="F:TAP1 binding"/>
    <property type="evidence" value="ECO:0000250"/>
    <property type="project" value="UniProtKB"/>
</dbReference>
<dbReference type="GO" id="GO:0046979">
    <property type="term" value="F:TAP2 binding"/>
    <property type="evidence" value="ECO:0000353"/>
    <property type="project" value="UniProtKB"/>
</dbReference>
<dbReference type="GO" id="GO:0002250">
    <property type="term" value="P:adaptive immune response"/>
    <property type="evidence" value="ECO:0007669"/>
    <property type="project" value="UniProtKB-KW"/>
</dbReference>
<dbReference type="GO" id="GO:0019885">
    <property type="term" value="P:antigen processing and presentation of endogenous peptide antigen via MHC class I"/>
    <property type="evidence" value="ECO:0000314"/>
    <property type="project" value="UniProt"/>
</dbReference>
<dbReference type="GO" id="GO:0046967">
    <property type="term" value="P:cytosol to endoplasmic reticulum transport"/>
    <property type="evidence" value="ECO:0000315"/>
    <property type="project" value="UniProtKB"/>
</dbReference>
<dbReference type="GO" id="GO:0006952">
    <property type="term" value="P:defense response"/>
    <property type="evidence" value="ECO:0007669"/>
    <property type="project" value="Ensembl"/>
</dbReference>
<dbReference type="GO" id="GO:0015833">
    <property type="term" value="P:peptide transport"/>
    <property type="evidence" value="ECO:0000315"/>
    <property type="project" value="UniProtKB"/>
</dbReference>
<dbReference type="GO" id="GO:0015031">
    <property type="term" value="P:protein transport"/>
    <property type="evidence" value="ECO:0007669"/>
    <property type="project" value="UniProtKB-KW"/>
</dbReference>
<dbReference type="GO" id="GO:0055085">
    <property type="term" value="P:transmembrane transport"/>
    <property type="evidence" value="ECO:0000318"/>
    <property type="project" value="GO_Central"/>
</dbReference>
<dbReference type="CDD" id="cd18589">
    <property type="entry name" value="ABC_6TM_TAP1"/>
    <property type="match status" value="1"/>
</dbReference>
<dbReference type="CDD" id="cd03248">
    <property type="entry name" value="ABCC_TAP"/>
    <property type="match status" value="1"/>
</dbReference>
<dbReference type="DisProt" id="DP01306"/>
<dbReference type="FunFam" id="3.40.50.300:FF:000140">
    <property type="entry name" value="Lipid A export ATP-binding/permease protein MsbA"/>
    <property type="match status" value="1"/>
</dbReference>
<dbReference type="FunFam" id="1.20.1560.10:FF:000068">
    <property type="entry name" value="Transporter 1 ATP-binding cassette sub-family B"/>
    <property type="match status" value="1"/>
</dbReference>
<dbReference type="Gene3D" id="1.20.1560.10">
    <property type="entry name" value="ABC transporter type 1, transmembrane domain"/>
    <property type="match status" value="1"/>
</dbReference>
<dbReference type="Gene3D" id="3.40.50.300">
    <property type="entry name" value="P-loop containing nucleotide triphosphate hydrolases"/>
    <property type="match status" value="1"/>
</dbReference>
<dbReference type="InterPro" id="IPR003593">
    <property type="entry name" value="AAA+_ATPase"/>
</dbReference>
<dbReference type="InterPro" id="IPR011527">
    <property type="entry name" value="ABC1_TM_dom"/>
</dbReference>
<dbReference type="InterPro" id="IPR036640">
    <property type="entry name" value="ABC1_TM_sf"/>
</dbReference>
<dbReference type="InterPro" id="IPR013305">
    <property type="entry name" value="ABC_Tap-like"/>
</dbReference>
<dbReference type="InterPro" id="IPR003439">
    <property type="entry name" value="ABC_transporter-like_ATP-bd"/>
</dbReference>
<dbReference type="InterPro" id="IPR017871">
    <property type="entry name" value="ABC_transporter-like_CS"/>
</dbReference>
<dbReference type="InterPro" id="IPR027417">
    <property type="entry name" value="P-loop_NTPase"/>
</dbReference>
<dbReference type="InterPro" id="IPR039421">
    <property type="entry name" value="Type_1_exporter"/>
</dbReference>
<dbReference type="NCBIfam" id="TIGR00958">
    <property type="entry name" value="3a01208"/>
    <property type="match status" value="1"/>
</dbReference>
<dbReference type="PANTHER" id="PTHR43394:SF13">
    <property type="entry name" value="ANTIGEN PEPTIDE TRANSPORTER 1"/>
    <property type="match status" value="1"/>
</dbReference>
<dbReference type="PANTHER" id="PTHR43394">
    <property type="entry name" value="ATP-DEPENDENT PERMEASE MDL1, MITOCHONDRIAL"/>
    <property type="match status" value="1"/>
</dbReference>
<dbReference type="Pfam" id="PF00664">
    <property type="entry name" value="ABC_membrane"/>
    <property type="match status" value="1"/>
</dbReference>
<dbReference type="Pfam" id="PF00005">
    <property type="entry name" value="ABC_tran"/>
    <property type="match status" value="1"/>
</dbReference>
<dbReference type="PIRSF" id="PIRSF002773">
    <property type="entry name" value="ABC_prm/ATPase_B"/>
    <property type="match status" value="1"/>
</dbReference>
<dbReference type="PRINTS" id="PR01896">
    <property type="entry name" value="TAP1PROTEIN"/>
</dbReference>
<dbReference type="SMART" id="SM00382">
    <property type="entry name" value="AAA"/>
    <property type="match status" value="1"/>
</dbReference>
<dbReference type="SUPFAM" id="SSF90123">
    <property type="entry name" value="ABC transporter transmembrane region"/>
    <property type="match status" value="1"/>
</dbReference>
<dbReference type="SUPFAM" id="SSF52540">
    <property type="entry name" value="P-loop containing nucleoside triphosphate hydrolases"/>
    <property type="match status" value="1"/>
</dbReference>
<dbReference type="PROSITE" id="PS50929">
    <property type="entry name" value="ABC_TM1F"/>
    <property type="match status" value="1"/>
</dbReference>
<dbReference type="PROSITE" id="PS00211">
    <property type="entry name" value="ABC_TRANSPORTER_1"/>
    <property type="match status" value="1"/>
</dbReference>
<dbReference type="PROSITE" id="PS50893">
    <property type="entry name" value="ABC_TRANSPORTER_2"/>
    <property type="match status" value="1"/>
</dbReference>
<proteinExistence type="evidence at protein level"/>
<sequence length="748" mass="80965">MASSRCPAPRGCRCLPGASLAWLGTVLLLLADWVLLRTALPRIFSLLVPTALPLLRVWAVGLSRWAVLWLGACGVLRATVGSKSENAGAQGWLAALKPLAAALGLALPGLALFRELISWGAPGSADSTRLLHWGSHPTAFVVSYAAALPAAALWHKLGSLWVPGGQGGSGNPVRRLLGCLGSETRRLSLFLVLVVLSSLGEMAIPFFTGRLTDWILQDGSADTFTRNLTLMSILTIASAVLEFVGDGIYNNTMGHVHSHLQGEVFGAVLRQETEFFQQNQTGNIMSRVTEDTSTLSDSLSENLSLFLWYLVRGLCLLGIMLWGSVSLTMVTLITLPLLFLLPKKVGKWYQLLEVQVRESLAKSSQVAIEALSAMPTVRSFANEEGEAQKFREKLQEIKTLNQKEAVAYAVNSWTTSISGMLLKVGILYIGGQLVTSGAVSSGNLVTFVLYQMQFTQAVEVLLSIYPRVQKAVGSSEKIFEYLDRTPRCPPSGLLTPLHLEGLVQFQDVSFAYPNRPDVLVLQGLTFTLRPGEVTALVGPNGSGKSTVAALLQNLYQPTGGQLLLDGKPLPQYEHRYLHRQVAAVGQEPQVFGRSLQENIAYGLTQKPTMEEITAAAVKSGAHSFISGLPQGYDTEVDEAGSQLSGGQRQAVALARALIRKPCVLILDDATSALDANSQLQVEQLLYESPERYSRSVLLITQHLSLVEQADHILFLEGGAIREGGTHQQLMEKKGCYWAMVQAPADAPE</sequence>
<keyword id="KW-0002">3D-structure</keyword>
<keyword id="KW-1064">Adaptive immunity</keyword>
<keyword id="KW-0024">Alternative initiation</keyword>
<keyword id="KW-0067">ATP-binding</keyword>
<keyword id="KW-0256">Endoplasmic reticulum</keyword>
<keyword id="KW-0945">Host-virus interaction</keyword>
<keyword id="KW-0391">Immunity</keyword>
<keyword id="KW-0460">Magnesium</keyword>
<keyword id="KW-0472">Membrane</keyword>
<keyword id="KW-0479">Metal-binding</keyword>
<keyword id="KW-0547">Nucleotide-binding</keyword>
<keyword id="KW-0571">Peptide transport</keyword>
<keyword id="KW-0653">Protein transport</keyword>
<keyword id="KW-1267">Proteomics identification</keyword>
<keyword id="KW-1185">Reference proteome</keyword>
<keyword id="KW-1278">Translocase</keyword>
<keyword id="KW-0812">Transmembrane</keyword>
<keyword id="KW-1133">Transmembrane helix</keyword>
<keyword id="KW-0813">Transport</keyword>
<organism>
    <name type="scientific">Homo sapiens</name>
    <name type="common">Human</name>
    <dbReference type="NCBI Taxonomy" id="9606"/>
    <lineage>
        <taxon>Eukaryota</taxon>
        <taxon>Metazoa</taxon>
        <taxon>Chordata</taxon>
        <taxon>Craniata</taxon>
        <taxon>Vertebrata</taxon>
        <taxon>Euteleostomi</taxon>
        <taxon>Mammalia</taxon>
        <taxon>Eutheria</taxon>
        <taxon>Euarchontoglires</taxon>
        <taxon>Primates</taxon>
        <taxon>Haplorrhini</taxon>
        <taxon>Catarrhini</taxon>
        <taxon>Hominidae</taxon>
        <taxon>Homo</taxon>
    </lineage>
</organism>
<accession>Q03518</accession>
<accession>Q16149</accession>
<accession>Q96CP4</accession>
<feature type="chain" id="PRO_0000093326" description="Antigen peptide transporter 1">
    <location>
        <begin position="1"/>
        <end position="748"/>
    </location>
</feature>
<feature type="topological domain" description="Cytoplasmic" evidence="2">
    <location>
        <begin position="1"/>
        <end position="15"/>
    </location>
</feature>
<feature type="transmembrane region" description="Helical; Name=1" evidence="4">
    <location>
        <begin position="16"/>
        <end position="36"/>
    </location>
</feature>
<feature type="topological domain" description="Lumenal" evidence="2">
    <location>
        <begin position="37"/>
        <end position="53"/>
    </location>
</feature>
<feature type="transmembrane region" description="Helical; Name=2" evidence="4">
    <location>
        <begin position="54"/>
        <end position="76"/>
    </location>
</feature>
<feature type="topological domain" description="Cytoplasmic" evidence="2">
    <location>
        <begin position="77"/>
        <end position="92"/>
    </location>
</feature>
<feature type="transmembrane region" description="Helical; Name=3" evidence="4">
    <location>
        <begin position="93"/>
        <end position="113"/>
    </location>
</feature>
<feature type="topological domain" description="Lumenal" evidence="2">
    <location>
        <begin position="114"/>
        <end position="133"/>
    </location>
</feature>
<feature type="transmembrane region" description="Helical; Name=4" evidence="4">
    <location>
        <begin position="134"/>
        <end position="154"/>
    </location>
</feature>
<feature type="topological domain" description="Cytoplasmic" evidence="2">
    <location>
        <begin position="155"/>
        <end position="186"/>
    </location>
</feature>
<feature type="transmembrane region" description="Helical; Name=5" evidence="4">
    <location>
        <begin position="187"/>
        <end position="207"/>
    </location>
</feature>
<feature type="topological domain" description="Lumenal" evidence="2">
    <location>
        <begin position="208"/>
        <end position="227"/>
    </location>
</feature>
<feature type="transmembrane region" description="Helical; Name=6" evidence="4">
    <location>
        <begin position="228"/>
        <end position="248"/>
    </location>
</feature>
<feature type="topological domain" description="Cytoplasmic" evidence="2">
    <location>
        <begin position="249"/>
        <end position="298"/>
    </location>
</feature>
<feature type="transmembrane region" description="Helical; Name=7" evidence="4">
    <location>
        <begin position="299"/>
        <end position="319"/>
    </location>
</feature>
<feature type="topological domain" description="Lumenal" evidence="2">
    <location>
        <begin position="320"/>
        <end position="328"/>
    </location>
</feature>
<feature type="transmembrane region" description="Helical; Name=8" evidence="4">
    <location>
        <begin position="329"/>
        <end position="349"/>
    </location>
</feature>
<feature type="topological domain" description="Cytoplasmic" evidence="2">
    <location>
        <begin position="350"/>
        <end position="418"/>
    </location>
</feature>
<feature type="transmembrane region" description="Helical; Name=9" evidence="4">
    <location>
        <begin position="419"/>
        <end position="439"/>
    </location>
</feature>
<feature type="topological domain" description="Lumenal" evidence="2">
    <location>
        <begin position="440"/>
        <end position="443"/>
    </location>
</feature>
<feature type="transmembrane region" description="Helical; Name=10" evidence="4">
    <location>
        <begin position="444"/>
        <end position="464"/>
    </location>
</feature>
<feature type="topological domain" description="Cytoplasmic" evidence="2">
    <location>
        <begin position="465"/>
        <end position="748"/>
    </location>
</feature>
<feature type="domain" description="ABC transmembrane type-1" evidence="4">
    <location>
        <begin position="187"/>
        <end position="470"/>
    </location>
</feature>
<feature type="domain" description="ABC transporter" evidence="3">
    <location>
        <begin position="503"/>
        <end position="742"/>
    </location>
</feature>
<feature type="region of interest" description="Part of the peptide-binding site" evidence="31">
    <location>
        <begin position="375"/>
        <end position="420"/>
    </location>
</feature>
<feature type="region of interest" description="Part of the peptide-binding site" evidence="31">
    <location>
        <begin position="453"/>
        <end position="487"/>
    </location>
</feature>
<feature type="binding site" evidence="1 3">
    <location>
        <begin position="538"/>
        <end position="546"/>
    </location>
    <ligand>
        <name>ATP</name>
        <dbReference type="ChEBI" id="CHEBI:30616"/>
    </ligand>
</feature>
<feature type="binding site" evidence="11 44">
    <location>
        <position position="545"/>
    </location>
    <ligand>
        <name>Mg(2+)</name>
        <dbReference type="ChEBI" id="CHEBI:18420"/>
    </ligand>
</feature>
<feature type="binding site" evidence="1">
    <location>
        <begin position="641"/>
        <end position="647"/>
    </location>
    <ligand>
        <name>ATP</name>
        <dbReference type="ChEBI" id="CHEBI:30616"/>
    </ligand>
</feature>
<feature type="binding site" evidence="1">
    <location>
        <position position="701"/>
    </location>
    <ligand>
        <name>ATP</name>
        <dbReference type="ChEBI" id="CHEBI:30616"/>
    </ligand>
</feature>
<feature type="site" description="Inter-subunit salt bridge with TAPBP" evidence="22">
    <location>
        <position position="32"/>
    </location>
</feature>
<feature type="splice variant" id="VSP_061432" description="In isoform 2.">
    <original>M</original>
    <variation>MAELLASAGSACSWDFPRAPPSFPPPAASRGGLGGTRSFRPHRGAESPRPGRDRDGVRVPM</variation>
    <location>
        <position position="1"/>
    </location>
</feature>
<feature type="sequence variant" id="VAR_016801" description="In dbSNP:rs375389015." evidence="12">
    <original>P</original>
    <variation>S</variation>
    <location>
        <position position="7"/>
    </location>
</feature>
<feature type="sequence variant" id="VAR_016802" description="In dbSNP:rs57640466." evidence="12">
    <original>G</original>
    <variation>R</variation>
    <location>
        <position position="17"/>
    </location>
</feature>
<feature type="sequence variant" id="VAR_048137" description="In dbSNP:rs2228108.">
    <original>L</original>
    <variation>V</variation>
    <location>
        <position position="110"/>
    </location>
</feature>
<feature type="sequence variant" id="VAR_060987" description="In dbSNP:rs36229525.">
    <original>V</original>
    <variation>L</variation>
    <location>
        <position position="244"/>
    </location>
</feature>
<feature type="sequence variant" id="VAR_048138" description="In dbSNP:rs2228111.">
    <original>S</original>
    <variation>F</variation>
    <location>
        <position position="286"/>
    </location>
</feature>
<feature type="sequence variant" id="VAR_000092" description="In allele TAP1*02:01, allele TAP1*03:01, allele TAP1*04:01 and allele TAP1*x; dbSNP:rs1057141." evidence="9 12 15 26">
    <original>I</original>
    <variation>V</variation>
    <location>
        <position position="333"/>
    </location>
</feature>
<feature type="sequence variant" id="VAR_013151" description="In allele TAP1*x; dbSNP:rs2127679." evidence="9 12">
    <original>A</original>
    <variation>V</variation>
    <location>
        <position position="370"/>
    </location>
</feature>
<feature type="sequence variant" id="VAR_016803" description="In dbSNP:rs2228110." evidence="12">
    <original>G</original>
    <variation>C</variation>
    <location>
        <position position="419"/>
    </location>
</feature>
<feature type="sequence variant" id="VAR_013152" description="In allele TAP1*04:01; dbSNP:rs41550019." evidence="9 12 26">
    <original>V</original>
    <variation>L</variation>
    <location>
        <position position="458"/>
    </location>
</feature>
<feature type="sequence variant" id="VAR_013153" description="In allele TAP1*x; dbSNP:rs41561219." evidence="9">
    <original>V</original>
    <variation>I</variation>
    <location>
        <position position="518"/>
    </location>
</feature>
<feature type="sequence variant" id="VAR_000093" description="In allele TAP1*02:01, allele TAP1*04:01 and allele TAP1*x; dbSNP:rs1135216." evidence="9 12 15 25 26">
    <original>D</original>
    <variation>G</variation>
    <location>
        <position position="637"/>
    </location>
</feature>
<feature type="sequence variant" id="VAR_013154" description="In allele TAP1*04:01; dbSNP:rs1057149." evidence="9 12 25 26">
    <original>R</original>
    <variation>Q</variation>
    <location>
        <position position="648"/>
    </location>
</feature>
<feature type="sequence variant" id="VAR_013173" description="In a lung cancer cell line deficient in MHC class I presentation; dbSNP:rs121917702." evidence="28">
    <original>R</original>
    <variation>Q</variation>
    <location>
        <position position="659"/>
    </location>
</feature>
<feature type="sequence variant" id="VAR_047514" description="In dbSNP:rs1057149.">
    <original>Q</original>
    <variation>R</variation>
    <location>
        <position position="708"/>
    </location>
</feature>
<feature type="mutagenesis site" description="Complete loss of interaction with TAPBP, resulting in impaired PLC assembly and antigen presentation." evidence="22">
    <original>D</original>
    <variation>K</variation>
    <location>
        <position position="32"/>
    </location>
</feature>
<feature type="mutagenesis site" description="Impairs allosteric coupling of peptide transport to ATP hydrolysis, converting the unidirectional active pump into a passive bidirectional nucleotide-gated facilitator. Inactive in peptide transport when associated with 'A-638' of TAP2." evidence="20">
    <original>D</original>
    <variation>A</variation>
    <location>
        <position position="674"/>
    </location>
</feature>
<feature type="helix" evidence="47">
    <location>
        <begin position="181"/>
        <end position="183"/>
    </location>
</feature>
<feature type="helix" evidence="46">
    <location>
        <begin position="184"/>
        <end position="201"/>
    </location>
</feature>
<feature type="helix" evidence="46">
    <location>
        <begin position="203"/>
        <end position="216"/>
    </location>
</feature>
<feature type="helix" evidence="46">
    <location>
        <begin position="221"/>
        <end position="269"/>
    </location>
</feature>
<feature type="helix" evidence="46">
    <location>
        <begin position="289"/>
        <end position="323"/>
    </location>
</feature>
<feature type="helix" evidence="46">
    <location>
        <begin position="325"/>
        <end position="372"/>
    </location>
</feature>
<feature type="helix" evidence="46">
    <location>
        <begin position="374"/>
        <end position="380"/>
    </location>
</feature>
<feature type="helix" evidence="46">
    <location>
        <begin position="383"/>
        <end position="436"/>
    </location>
</feature>
<feature type="helix" evidence="46">
    <location>
        <begin position="441"/>
        <end position="475"/>
    </location>
</feature>
<feature type="strand" evidence="45">
    <location>
        <begin position="503"/>
        <end position="510"/>
    </location>
</feature>
<feature type="helix" evidence="47">
    <location>
        <begin position="516"/>
        <end position="518"/>
    </location>
</feature>
<feature type="strand" evidence="45">
    <location>
        <begin position="520"/>
        <end position="528"/>
    </location>
</feature>
<feature type="strand" evidence="45">
    <location>
        <begin position="533"/>
        <end position="537"/>
    </location>
</feature>
<feature type="helix" evidence="46">
    <location>
        <begin position="540"/>
        <end position="542"/>
    </location>
</feature>
<feature type="helix" evidence="45">
    <location>
        <begin position="544"/>
        <end position="551"/>
    </location>
</feature>
<feature type="strand" evidence="45">
    <location>
        <begin position="558"/>
        <end position="564"/>
    </location>
</feature>
<feature type="helix" evidence="45">
    <location>
        <begin position="569"/>
        <end position="571"/>
    </location>
</feature>
<feature type="helix" evidence="45">
    <location>
        <begin position="574"/>
        <end position="580"/>
    </location>
</feature>
<feature type="strand" evidence="45">
    <location>
        <begin position="581"/>
        <end position="584"/>
    </location>
</feature>
<feature type="strand" evidence="45">
    <location>
        <begin position="592"/>
        <end position="594"/>
    </location>
</feature>
<feature type="helix" evidence="45">
    <location>
        <begin position="595"/>
        <end position="600"/>
    </location>
</feature>
<feature type="helix" evidence="45">
    <location>
        <begin position="609"/>
        <end position="618"/>
    </location>
</feature>
<feature type="helix" evidence="45">
    <location>
        <begin position="622"/>
        <end position="626"/>
    </location>
</feature>
<feature type="helix" evidence="45">
    <location>
        <begin position="631"/>
        <end position="633"/>
    </location>
</feature>
<feature type="helix" evidence="46">
    <location>
        <begin position="638"/>
        <end position="640"/>
    </location>
</feature>
<feature type="strand" evidence="45">
    <location>
        <begin position="641"/>
        <end position="643"/>
    </location>
</feature>
<feature type="helix" evidence="45">
    <location>
        <begin position="645"/>
        <end position="657"/>
    </location>
</feature>
<feature type="strand" evidence="45">
    <location>
        <begin position="662"/>
        <end position="668"/>
    </location>
</feature>
<feature type="turn" evidence="45">
    <location>
        <begin position="669"/>
        <end position="672"/>
    </location>
</feature>
<feature type="helix" evidence="45">
    <location>
        <begin position="675"/>
        <end position="686"/>
    </location>
</feature>
<feature type="helix" evidence="45">
    <location>
        <begin position="689"/>
        <end position="693"/>
    </location>
</feature>
<feature type="strand" evidence="45">
    <location>
        <begin position="695"/>
        <end position="699"/>
    </location>
</feature>
<feature type="helix" evidence="45">
    <location>
        <begin position="703"/>
        <end position="707"/>
    </location>
</feature>
<feature type="strand" evidence="45">
    <location>
        <begin position="710"/>
        <end position="716"/>
    </location>
</feature>
<feature type="strand" evidence="45">
    <location>
        <begin position="719"/>
        <end position="724"/>
    </location>
</feature>
<feature type="helix" evidence="45">
    <location>
        <begin position="726"/>
        <end position="732"/>
    </location>
</feature>
<feature type="helix" evidence="45">
    <location>
        <begin position="735"/>
        <end position="740"/>
    </location>
</feature>
<name>TAP1_HUMAN</name>
<comment type="function">
    <text evidence="10 13 20 21 22 23 33">ABC transporter associated with antigen processing. In complex with TAP2 mediates unidirectional translocation of peptide antigens from cytosol to endoplasmic reticulum (ER) for loading onto MHC class I (MHCI) molecules (PubMed:25377891, PubMed:25656091). Uses the chemical energy of ATP to export peptides against the concentration gradient (PubMed:25377891). During the transport cycle alternates between 'inward-facing' state with peptide binding site facing the cytosol to 'outward-facing' state with peptide binding site facing the ER lumen. Peptide antigen binding to ATP-loaded TAP1-TAP2 induces a switch to hydrolysis-competent 'outward-facing' conformation ready for peptide loading onto nascent MHCI molecules. Subsequently ATP hydrolysis resets the transporter to the 'inward facing' state for a new cycle (PubMed:11274390, PubMed:25377891, PubMed:25656091). Typically transports intracellular peptide antigens of 8 to 13 amino acids that arise from cytosolic proteolysis via IFNG-induced immunoproteasome. Binds peptides with free N- and C-termini, the first three and the C-terminal residues being critical. Preferentially selects peptides having a highly hydrophobic residue at position 3 and hydrophobic or charged residues at the C-terminal anchor. Proline at position 2 has the most destabilizing effect (PubMed:11274390, PubMed:7500034, PubMed:9256420). As a component of the peptide loading complex (PLC), acts as a molecular scaffold essential for peptide-MHCI assembly and antigen presentation (PubMed:1538751, PubMed:25377891, PubMed:26611325).</text>
</comment>
<comment type="catalytic activity">
    <reaction evidence="10 20 21">
        <text>a peptide antigen(in) + ATP + H2O = a peptide antigen(out) + ADP + phosphate + H(+)</text>
        <dbReference type="Rhea" id="RHEA:65972"/>
        <dbReference type="Rhea" id="RHEA-COMP:16941"/>
        <dbReference type="ChEBI" id="CHEBI:15377"/>
        <dbReference type="ChEBI" id="CHEBI:15378"/>
        <dbReference type="ChEBI" id="CHEBI:30616"/>
        <dbReference type="ChEBI" id="CHEBI:43474"/>
        <dbReference type="ChEBI" id="CHEBI:166823"/>
        <dbReference type="ChEBI" id="CHEBI:456216"/>
        <dbReference type="EC" id="7.4.2.14"/>
    </reaction>
    <physiologicalReaction direction="left-to-right" evidence="40 41 42">
        <dbReference type="Rhea" id="RHEA:65973"/>
    </physiologicalReaction>
</comment>
<comment type="cofactor">
    <cofactor evidence="11 20 44">
        <name>Mg(2+)</name>
        <dbReference type="ChEBI" id="CHEBI:18420"/>
    </cofactor>
</comment>
<comment type="activity regulation">
    <text evidence="20">Inhibited at high ER lumenal peptide concentrations.</text>
</comment>
<comment type="activity regulation">
    <text evidence="21 29">(Microbial infection) Inhibited by herpes simplex virus US12/ICP47 protein, which blocks the peptide-binding site of TAP1-TAP2.</text>
</comment>
<comment type="activity regulation">
    <text evidence="8 21 32">(Microbial infection) Inhibited by human cytomegalovirus US6 glycoprotein, which binds to the lumenal side of TAP1-TAP2 complex and inhibits peptide translocation by specifically blocking ATP-binding and preventing TAP1-TAP2 conformational rearrangement induced by peptide binding.</text>
</comment>
<comment type="biophysicochemical properties">
    <kinetics>
        <KM evidence="10">0.3 mM for ATP</KM>
        <KM evidence="20">0.099 mM for ATP</KM>
        <Vmax evidence="10">2.0 umol/min/mg enzyme toward ATP</Vmax>
    </kinetics>
</comment>
<comment type="subunit">
    <text evidence="7 13 14 19 22 27 30 35">Heterodimer of TAP1 and TAP2 (TAP1-TAP2) (PubMed:1538751). A component of the peptide loading complex (PLC), interacts via TAPBP with MHCI heterodimer; this interaction mediates peptide-MHCI assembly (PubMed:26611325). Recruits TAPBP in a 1:1 stoichiometry (PubMed:22638925). Interacts with classical MHCI such as HLA-A*02-B2M; this interaction is obligatory for the loading of peptide epitopes (PubMed:8630735, PubMed:8805302). Interacts with non-classical MHCI molecules including HLA-E-B2M and HLA-F-B2M as well as PLC component CALR before the peptide loading (PubMed:10605026, PubMed:9427624). Interacts with PSMB5 and PSMB8 (PubMed:15488952).</text>
</comment>
<comment type="subunit">
    <text evidence="17">(Microbial infection) Interacts with Epstein-Barr virus BNLF2a.</text>
</comment>
<comment type="subunit">
    <text evidence="24">(Microbial infection) Interacts with herpes simplex virus US12/ICP47.</text>
</comment>
<comment type="subunit">
    <text evidence="6">(Microbial infection) Interacts with adenovirus E3-19K glycoprotein, which binds TAP1-TAP2 and acts as a TAPBP inhibitor, preventing TAP1-TAP2 association with MHCI.</text>
</comment>
<comment type="interaction">
    <interactant intactId="EBI-747259">
        <id>Q03518</id>
    </interactant>
    <interactant intactId="EBI-13059134">
        <id>Q13520</id>
        <label>AQP6</label>
    </interactant>
    <organismsDiffer>false</organismsDiffer>
    <experiments>3</experiments>
</comment>
<comment type="interaction">
    <interactant intactId="EBI-747259">
        <id>Q03518</id>
    </interactant>
    <interactant intactId="EBI-1049597">
        <id>P27797</id>
        <label>CALR</label>
    </interactant>
    <organismsDiffer>false</organismsDiffer>
    <experiments>2</experiments>
</comment>
<comment type="interaction">
    <interactant intactId="EBI-747259">
        <id>Q03518</id>
    </interactant>
    <interactant intactId="EBI-781551">
        <id>Q9Y282</id>
        <label>ERGIC3</label>
    </interactant>
    <organismsDiffer>false</organismsDiffer>
    <experiments>3</experiments>
</comment>
<comment type="interaction">
    <interactant intactId="EBI-747259">
        <id>Q03518</id>
    </interactant>
    <interactant intactId="EBI-17973325">
        <id>P60508</id>
        <label>ERVFRD-1</label>
    </interactant>
    <organismsDiffer>false</organismsDiffer>
    <experiments>3</experiments>
</comment>
<comment type="interaction">
    <interactant intactId="EBI-747259">
        <id>Q03518</id>
    </interactant>
    <interactant intactId="EBI-356700">
        <id>P57678</id>
        <label>GEMIN4</label>
    </interactant>
    <organismsDiffer>false</organismsDiffer>
    <experiments>3</experiments>
</comment>
<comment type="interaction">
    <interactant intactId="EBI-747259">
        <id>Q03518</id>
    </interactant>
    <interactant intactId="EBI-13345167">
        <id>Q8TDT2</id>
        <label>GPR152</label>
    </interactant>
    <organismsDiffer>false</organismsDiffer>
    <experiments>3</experiments>
</comment>
<comment type="interaction">
    <interactant intactId="EBI-747259">
        <id>Q03518</id>
    </interactant>
    <interactant intactId="EBI-11973993">
        <id>Q5TA81</id>
        <label>LCE2C</label>
    </interactant>
    <organismsDiffer>false</organismsDiffer>
    <experiments>3</experiments>
</comment>
<comment type="interaction">
    <interactant intactId="EBI-747259">
        <id>Q03518</id>
    </interactant>
    <interactant intactId="EBI-395883">
        <id>P07237</id>
        <label>P4HB</label>
    </interactant>
    <organismsDiffer>false</organismsDiffer>
    <experiments>4</experiments>
</comment>
<comment type="interaction">
    <interactant intactId="EBI-747259">
        <id>Q03518</id>
    </interactant>
    <interactant intactId="EBI-979862">
        <id>P30101</id>
        <label>PDIA3</label>
    </interactant>
    <organismsDiffer>false</organismsDiffer>
    <experiments>5</experiments>
</comment>
<comment type="interaction">
    <interactant intactId="EBI-747259">
        <id>Q03518</id>
    </interactant>
    <interactant intactId="EBI-2466594">
        <id>Q6ZMZ0</id>
        <label>RNF19B</label>
    </interactant>
    <organismsDiffer>false</organismsDiffer>
    <experiments>3</experiments>
</comment>
<comment type="interaction">
    <interactant intactId="EBI-747259">
        <id>Q03518</id>
    </interactant>
    <interactant intactId="EBI-3923031">
        <id>Q14973</id>
        <label>SLC10A1</label>
    </interactant>
    <organismsDiffer>false</organismsDiffer>
    <experiments>3</experiments>
</comment>
<comment type="interaction">
    <interactant intactId="EBI-747259">
        <id>Q03518</id>
    </interactant>
    <interactant intactId="EBI-18159983">
        <id>Q3KNW5</id>
        <label>SLC10A6</label>
    </interactant>
    <organismsDiffer>false</organismsDiffer>
    <experiments>3</experiments>
</comment>
<comment type="interaction">
    <interactant intactId="EBI-747259">
        <id>Q03518</id>
    </interactant>
    <interactant intactId="EBI-17295964">
        <id>Q9NQQ7-3</id>
        <label>SLC35C2</label>
    </interactant>
    <organismsDiffer>false</organismsDiffer>
    <experiments>3</experiments>
</comment>
<comment type="interaction">
    <interactant intactId="EBI-747259">
        <id>Q03518</id>
    </interactant>
    <interactant intactId="EBI-17280858">
        <id>Q8WWF3</id>
        <label>SSMEM1</label>
    </interactant>
    <organismsDiffer>false</organismsDiffer>
    <experiments>3</experiments>
</comment>
<comment type="interaction">
    <interactant intactId="EBI-747259">
        <id>Q03518</id>
    </interactant>
    <interactant intactId="EBI-780781">
        <id>Q03519</id>
        <label>TAP2</label>
    </interactant>
    <organismsDiffer>false</organismsDiffer>
    <experiments>15</experiments>
</comment>
<comment type="interaction">
    <interactant intactId="EBI-747259">
        <id>Q03518</id>
    </interactant>
    <interactant intactId="EBI-874801">
        <id>O15533</id>
        <label>TAPBP</label>
    </interactant>
    <organismsDiffer>false</organismsDiffer>
    <experiments>13</experiments>
</comment>
<comment type="interaction">
    <interactant intactId="EBI-747259">
        <id>Q03518</id>
    </interactant>
    <interactant intactId="EBI-5280316">
        <id>Q13769</id>
        <label>THOC5</label>
    </interactant>
    <organismsDiffer>false</organismsDiffer>
    <experiments>4</experiments>
</comment>
<comment type="interaction">
    <interactant intactId="EBI-747259">
        <id>Q03518</id>
    </interactant>
    <interactant intactId="EBI-8638294">
        <id>Q9NUH8</id>
        <label>TMEM14B</label>
    </interactant>
    <organismsDiffer>false</organismsDiffer>
    <experiments>3</experiments>
</comment>
<comment type="interaction">
    <interactant intactId="EBI-747259">
        <id>Q03518</id>
    </interactant>
    <interactant intactId="EBI-9346744">
        <id>P0C739</id>
        <label>BNLF2a</label>
    </interactant>
    <organismsDiffer>true</organismsDiffer>
    <experiments>9</experiments>
</comment>
<comment type="interaction">
    <interactant intactId="EBI-747259">
        <id>Q03518</id>
    </interactant>
    <interactant intactId="EBI-11303846">
        <id>Q77CE4</id>
        <label>gN</label>
    </interactant>
    <organismsDiffer>true</organismsDiffer>
    <experiments>6</experiments>
</comment>
<comment type="interaction">
    <interactant intactId="EBI-31441209">
        <id>Q03518-2</id>
    </interactant>
    <interactant intactId="EBI-780781">
        <id>Q03519</id>
        <label>TAP2</label>
    </interactant>
    <organismsDiffer>false</organismsDiffer>
    <experiments>4</experiments>
</comment>
<comment type="subcellular location">
    <subcellularLocation>
        <location evidence="16 19">Endoplasmic reticulum membrane</location>
        <topology evidence="2">Multi-pass membrane protein</topology>
    </subcellularLocation>
    <text>The transmembrane segments seem to form a pore in the membrane.</text>
</comment>
<comment type="alternative products">
    <event type="alternative initiation"/>
    <isoform>
        <id>Q03518-1</id>
        <name>1</name>
        <sequence type="displayed"/>
    </isoform>
    <isoform>
        <id>Q03518-2</id>
        <name>2</name>
        <sequence type="described" ref="VSP_061432"/>
    </isoform>
</comment>
<comment type="tissue specificity">
    <text evidence="21 34">Highly expressed in professional APCs monocytes and dendritic cells as well as in lymphocyte subsets T cells, B cells and NK cells.</text>
</comment>
<comment type="induction">
    <text evidence="18 34">Up-regulated by IFNG (PubMed:1946428). Down-regulated by IL10 (PubMed:9310490).</text>
</comment>
<comment type="induction">
    <text evidence="34">(Microbial infection) Down-regulated by BCRF1/viral IL10.</text>
</comment>
<comment type="domain">
    <text evidence="31">The peptide-binding site is shared between the cytoplasmic loops of TAP1 and TAP2.</text>
</comment>
<comment type="domain">
    <text evidence="1">The nucleotide-binding domain (NBD) mediates ATP hydrolysis coupled to peptide translocation. Two ATP molecules are accommodated at distinct nucleotide binding sites (NBS) at TAP1-TAP2 dimer interface. Each NBS is formed by Walker A (GxxGxGKST) and Q-loop motifs from NBD of one subunit, while the NBD from the second subunit completes the active site by contributing the C loop motif (LSGGQ). Each ATP molecule is coordinated via the beta- and gamma-phosphates to a Mg2+ ion, which is necessary for ATP hydrolysis.</text>
</comment>
<comment type="polymorphism">
    <text evidence="9 12 15 25 26">There are five common alleles; TAP1*01:01 (PSF1A), TAP1*02:01 (PSF1B), TAP1*03:01 (PSF1C), TAP1*01:04 and TAP1*x. The sequence of TAP1*01:01 is shown here.</text>
</comment>
<comment type="disease" evidence="5">
    <disease id="DI-00170">
        <name>MHC class I deficiency 1</name>
        <acronym>MHC1D1</acronym>
        <description>An autosomal recessive immunologic disorder characterized by chronic bacterial infections of the respiratory tract, beginning in the first or second decade of life and usually progressing to bronchiectasis. Patients have nasal polyps and may develop chronic necrotizing granulomatous lesions affecting the nasal cavity, upper respiratory tract, and skin.</description>
        <dbReference type="MIM" id="604571"/>
    </disease>
    <text>The disease is caused by variants affecting the gene represented in this entry.</text>
</comment>
<comment type="similarity">
    <text evidence="39">Belongs to the ABC transporter superfamily. ABCB family. MHC peptide exporter (TC 3.A.1.209) subfamily.</text>
</comment>
<comment type="sequence caution" evidence="39">
    <conflict type="erroneous initiation">
        <sequence resource="EMBL-CDS" id="CAA47025"/>
    </conflict>
</comment>
<comment type="sequence caution" evidence="39">
    <conflict type="erroneous initiation">
        <sequence resource="EMBL-CDS" id="CAA60785"/>
    </conflict>
</comment>
<comment type="online information" name="TAP1base">
    <link uri="https://databases.lovd.nl/shared/genes/TAP1"/>
    <text>TAP1 mutation db</text>
</comment>
<comment type="online information" name="ABCMdb">
    <link uri="http://abcm2.hegelab.org/search"/>
    <text>Database for mutations in ABC proteins</text>
</comment>
<gene>
    <name evidence="36 43" type="primary">TAP1</name>
    <name type="synonym">ABCB2</name>
    <name type="synonym">PSF1</name>
    <name type="synonym">RING4</name>
    <name type="synonym">Y3</name>
</gene>
<evidence type="ECO:0000250" key="1">
    <source>
        <dbReference type="UniProtKB" id="P36370"/>
    </source>
</evidence>
<evidence type="ECO:0000255" key="2"/>
<evidence type="ECO:0000255" key="3">
    <source>
        <dbReference type="PROSITE-ProRule" id="PRU00434"/>
    </source>
</evidence>
<evidence type="ECO:0000255" key="4">
    <source>
        <dbReference type="PROSITE-ProRule" id="PRU00441"/>
    </source>
</evidence>
<evidence type="ECO:0000269" key="5">
    <source>
    </source>
</evidence>
<evidence type="ECO:0000269" key="6">
    <source>
    </source>
</evidence>
<evidence type="ECO:0000269" key="7">
    <source>
    </source>
</evidence>
<evidence type="ECO:0000269" key="8">
    <source>
    </source>
</evidence>
<evidence type="ECO:0000269" key="9">
    <source>
    </source>
</evidence>
<evidence type="ECO:0000269" key="10">
    <source>
    </source>
</evidence>
<evidence type="ECO:0000269" key="11">
    <source>
    </source>
</evidence>
<evidence type="ECO:0000269" key="12">
    <source>
    </source>
</evidence>
<evidence type="ECO:0000269" key="13">
    <source>
    </source>
</evidence>
<evidence type="ECO:0000269" key="14">
    <source>
    </source>
</evidence>
<evidence type="ECO:0000269" key="15">
    <source>
    </source>
</evidence>
<evidence type="ECO:0000269" key="16">
    <source>
    </source>
</evidence>
<evidence type="ECO:0000269" key="17">
    <source>
    </source>
</evidence>
<evidence type="ECO:0000269" key="18">
    <source>
    </source>
</evidence>
<evidence type="ECO:0000269" key="19">
    <source>
    </source>
</evidence>
<evidence type="ECO:0000269" key="20">
    <source>
    </source>
</evidence>
<evidence type="ECO:0000269" key="21">
    <source>
    </source>
</evidence>
<evidence type="ECO:0000269" key="22">
    <source>
    </source>
</evidence>
<evidence type="ECO:0000269" key="23">
    <source>
    </source>
</evidence>
<evidence type="ECO:0000269" key="24">
    <source>
    </source>
</evidence>
<evidence type="ECO:0000269" key="25">
    <source>
    </source>
</evidence>
<evidence type="ECO:0000269" key="26">
    <source>
    </source>
</evidence>
<evidence type="ECO:0000269" key="27">
    <source>
    </source>
</evidence>
<evidence type="ECO:0000269" key="28">
    <source>
    </source>
</evidence>
<evidence type="ECO:0000269" key="29">
    <source>
    </source>
</evidence>
<evidence type="ECO:0000269" key="30">
    <source>
    </source>
</evidence>
<evidence type="ECO:0000269" key="31">
    <source>
    </source>
</evidence>
<evidence type="ECO:0000269" key="32">
    <source>
    </source>
</evidence>
<evidence type="ECO:0000269" key="33">
    <source>
    </source>
</evidence>
<evidence type="ECO:0000269" key="34">
    <source>
    </source>
</evidence>
<evidence type="ECO:0000269" key="35">
    <source>
    </source>
</evidence>
<evidence type="ECO:0000303" key="36">
    <source>
    </source>
</evidence>
<evidence type="ECO:0000303" key="37">
    <source>
    </source>
</evidence>
<evidence type="ECO:0000303" key="38">
    <source>
    </source>
</evidence>
<evidence type="ECO:0000305" key="39"/>
<evidence type="ECO:0000305" key="40">
    <source>
    </source>
</evidence>
<evidence type="ECO:0000305" key="41">
    <source>
    </source>
</evidence>
<evidence type="ECO:0000305" key="42">
    <source>
    </source>
</evidence>
<evidence type="ECO:0000312" key="43">
    <source>
        <dbReference type="HGNC" id="HGNC:43"/>
    </source>
</evidence>
<evidence type="ECO:0007744" key="44">
    <source>
        <dbReference type="PDB" id="1JJ7"/>
    </source>
</evidence>
<evidence type="ECO:0007829" key="45">
    <source>
        <dbReference type="PDB" id="1JJ7"/>
    </source>
</evidence>
<evidence type="ECO:0007829" key="46">
    <source>
        <dbReference type="PDB" id="8T4E"/>
    </source>
</evidence>
<evidence type="ECO:0007829" key="47">
    <source>
        <dbReference type="PDB" id="8T4F"/>
    </source>
</evidence>
<reference key="1">
    <citation type="journal article" date="1990" name="Nature">
        <title>Sequences encoded in the class II region of the MHC related to the 'ABC' superfamily of transporters.</title>
        <authorList>
            <person name="Trowsdale J."/>
            <person name="Hanson I."/>
            <person name="Mockridge I."/>
            <person name="Beck S."/>
            <person name="Townsend A."/>
            <person name="Kelly A."/>
        </authorList>
    </citation>
    <scope>NUCLEOTIDE SEQUENCE [MRNA]</scope>
</reference>
<reference key="2">
    <citation type="journal article" date="1992" name="J. Mol. Biol.">
        <title>DNA sequence analysis of 66 kb of the human MHC class II region encoding a cluster of genes for antigen processing.</title>
        <authorList>
            <person name="Beck S."/>
            <person name="Kelly A."/>
            <person name="Radley E."/>
            <person name="Khurshid F."/>
            <person name="Alderton R.P."/>
            <person name="Trowsdale J."/>
        </authorList>
    </citation>
    <scope>NUCLEOTIDE SEQUENCE [GENOMIC DNA]</scope>
</reference>
<reference key="3">
    <citation type="journal article" date="1996" name="J. Mol. Biol.">
        <title>Evolutionary dynamics of non-coding sequences within the class II region of the human MHC.</title>
        <authorList>
            <person name="Beck S."/>
            <person name="Abdulla S."/>
            <person name="Alderton R.P."/>
            <person name="Glynne R.J."/>
            <person name="Gut I.G."/>
            <person name="Hosking L.K."/>
            <person name="Jackson A."/>
            <person name="Kelly A."/>
            <person name="Newell W.R."/>
            <person name="Sanseau P."/>
            <person name="Radley E."/>
            <person name="Thorpe K.L."/>
            <person name="Trowsdale J."/>
        </authorList>
    </citation>
    <scope>NUCLEOTIDE SEQUENCE [GENOMIC DNA]</scope>
</reference>
<reference key="4">
    <citation type="journal article" date="2003" name="Nature">
        <title>The DNA sequence and analysis of human chromosome 6.</title>
        <authorList>
            <person name="Mungall A.J."/>
            <person name="Palmer S.A."/>
            <person name="Sims S.K."/>
            <person name="Edwards C.A."/>
            <person name="Ashurst J.L."/>
            <person name="Wilming L."/>
            <person name="Jones M.C."/>
            <person name="Horton R."/>
            <person name="Hunt S.E."/>
            <person name="Scott C.E."/>
            <person name="Gilbert J.G.R."/>
            <person name="Clamp M.E."/>
            <person name="Bethel G."/>
            <person name="Milne S."/>
            <person name="Ainscough R."/>
            <person name="Almeida J.P."/>
            <person name="Ambrose K.D."/>
            <person name="Andrews T.D."/>
            <person name="Ashwell R.I.S."/>
            <person name="Babbage A.K."/>
            <person name="Bagguley C.L."/>
            <person name="Bailey J."/>
            <person name="Banerjee R."/>
            <person name="Barker D.J."/>
            <person name="Barlow K.F."/>
            <person name="Bates K."/>
            <person name="Beare D.M."/>
            <person name="Beasley H."/>
            <person name="Beasley O."/>
            <person name="Bird C.P."/>
            <person name="Blakey S.E."/>
            <person name="Bray-Allen S."/>
            <person name="Brook J."/>
            <person name="Brown A.J."/>
            <person name="Brown J.Y."/>
            <person name="Burford D.C."/>
            <person name="Burrill W."/>
            <person name="Burton J."/>
            <person name="Carder C."/>
            <person name="Carter N.P."/>
            <person name="Chapman J.C."/>
            <person name="Clark S.Y."/>
            <person name="Clark G."/>
            <person name="Clee C.M."/>
            <person name="Clegg S."/>
            <person name="Cobley V."/>
            <person name="Collier R.E."/>
            <person name="Collins J.E."/>
            <person name="Colman L.K."/>
            <person name="Corby N.R."/>
            <person name="Coville G.J."/>
            <person name="Culley K.M."/>
            <person name="Dhami P."/>
            <person name="Davies J."/>
            <person name="Dunn M."/>
            <person name="Earthrowl M.E."/>
            <person name="Ellington A.E."/>
            <person name="Evans K.A."/>
            <person name="Faulkner L."/>
            <person name="Francis M.D."/>
            <person name="Frankish A."/>
            <person name="Frankland J."/>
            <person name="French L."/>
            <person name="Garner P."/>
            <person name="Garnett J."/>
            <person name="Ghori M.J."/>
            <person name="Gilby L.M."/>
            <person name="Gillson C.J."/>
            <person name="Glithero R.J."/>
            <person name="Grafham D.V."/>
            <person name="Grant M."/>
            <person name="Gribble S."/>
            <person name="Griffiths C."/>
            <person name="Griffiths M.N.D."/>
            <person name="Hall R."/>
            <person name="Halls K.S."/>
            <person name="Hammond S."/>
            <person name="Harley J.L."/>
            <person name="Hart E.A."/>
            <person name="Heath P.D."/>
            <person name="Heathcott R."/>
            <person name="Holmes S.J."/>
            <person name="Howden P.J."/>
            <person name="Howe K.L."/>
            <person name="Howell G.R."/>
            <person name="Huckle E."/>
            <person name="Humphray S.J."/>
            <person name="Humphries M.D."/>
            <person name="Hunt A.R."/>
            <person name="Johnson C.M."/>
            <person name="Joy A.A."/>
            <person name="Kay M."/>
            <person name="Keenan S.J."/>
            <person name="Kimberley A.M."/>
            <person name="King A."/>
            <person name="Laird G.K."/>
            <person name="Langford C."/>
            <person name="Lawlor S."/>
            <person name="Leongamornlert D.A."/>
            <person name="Leversha M."/>
            <person name="Lloyd C.R."/>
            <person name="Lloyd D.M."/>
            <person name="Loveland J.E."/>
            <person name="Lovell J."/>
            <person name="Martin S."/>
            <person name="Mashreghi-Mohammadi M."/>
            <person name="Maslen G.L."/>
            <person name="Matthews L."/>
            <person name="McCann O.T."/>
            <person name="McLaren S.J."/>
            <person name="McLay K."/>
            <person name="McMurray A."/>
            <person name="Moore M.J.F."/>
            <person name="Mullikin J.C."/>
            <person name="Niblett D."/>
            <person name="Nickerson T."/>
            <person name="Novik K.L."/>
            <person name="Oliver K."/>
            <person name="Overton-Larty E.K."/>
            <person name="Parker A."/>
            <person name="Patel R."/>
            <person name="Pearce A.V."/>
            <person name="Peck A.I."/>
            <person name="Phillimore B.J.C.T."/>
            <person name="Phillips S."/>
            <person name="Plumb R.W."/>
            <person name="Porter K.M."/>
            <person name="Ramsey Y."/>
            <person name="Ranby S.A."/>
            <person name="Rice C.M."/>
            <person name="Ross M.T."/>
            <person name="Searle S.M."/>
            <person name="Sehra H.K."/>
            <person name="Sheridan E."/>
            <person name="Skuce C.D."/>
            <person name="Smith S."/>
            <person name="Smith M."/>
            <person name="Spraggon L."/>
            <person name="Squares S.L."/>
            <person name="Steward C.A."/>
            <person name="Sycamore N."/>
            <person name="Tamlyn-Hall G."/>
            <person name="Tester J."/>
            <person name="Theaker A.J."/>
            <person name="Thomas D.W."/>
            <person name="Thorpe A."/>
            <person name="Tracey A."/>
            <person name="Tromans A."/>
            <person name="Tubby B."/>
            <person name="Wall M."/>
            <person name="Wallis J.M."/>
            <person name="West A.P."/>
            <person name="White S.S."/>
            <person name="Whitehead S.L."/>
            <person name="Whittaker H."/>
            <person name="Wild A."/>
            <person name="Willey D.J."/>
            <person name="Wilmer T.E."/>
            <person name="Wood J.M."/>
            <person name="Wray P.W."/>
            <person name="Wyatt J.C."/>
            <person name="Young L."/>
            <person name="Younger R.M."/>
            <person name="Bentley D.R."/>
            <person name="Coulson A."/>
            <person name="Durbin R.M."/>
            <person name="Hubbard T."/>
            <person name="Sulston J.E."/>
            <person name="Dunham I."/>
            <person name="Rogers J."/>
            <person name="Beck S."/>
        </authorList>
    </citation>
    <scope>NUCLEOTIDE SEQUENCE [LARGE SCALE GENOMIC DNA]</scope>
</reference>
<reference key="5">
    <citation type="submission" date="2005-07" db="EMBL/GenBank/DDBJ databases">
        <authorList>
            <person name="Mural R.J."/>
            <person name="Istrail S."/>
            <person name="Sutton G.G."/>
            <person name="Florea L."/>
            <person name="Halpern A.L."/>
            <person name="Mobarry C.M."/>
            <person name="Lippert R."/>
            <person name="Walenz B."/>
            <person name="Shatkay H."/>
            <person name="Dew I."/>
            <person name="Miller J.R."/>
            <person name="Flanigan M.J."/>
            <person name="Edwards N.J."/>
            <person name="Bolanos R."/>
            <person name="Fasulo D."/>
            <person name="Halldorsson B.V."/>
            <person name="Hannenhalli S."/>
            <person name="Turner R."/>
            <person name="Yooseph S."/>
            <person name="Lu F."/>
            <person name="Nusskern D.R."/>
            <person name="Shue B.C."/>
            <person name="Zheng X.H."/>
            <person name="Zhong F."/>
            <person name="Delcher A.L."/>
            <person name="Huson D.H."/>
            <person name="Kravitz S.A."/>
            <person name="Mouchard L."/>
            <person name="Reinert K."/>
            <person name="Remington K.A."/>
            <person name="Clark A.G."/>
            <person name="Waterman M.S."/>
            <person name="Eichler E.E."/>
            <person name="Adams M.D."/>
            <person name="Hunkapiller M.W."/>
            <person name="Myers E.W."/>
            <person name="Venter J.C."/>
        </authorList>
    </citation>
    <scope>NUCLEOTIDE SEQUENCE [LARGE SCALE GENOMIC DNA]</scope>
</reference>
<reference key="6">
    <citation type="journal article" date="2004" name="Genome Res.">
        <title>The status, quality, and expansion of the NIH full-length cDNA project: the Mammalian Gene Collection (MGC).</title>
        <authorList>
            <consortium name="The MGC Project Team"/>
        </authorList>
    </citation>
    <scope>NUCLEOTIDE SEQUENCE [LARGE SCALE MRNA]</scope>
    <source>
        <tissue>Uterus</tissue>
    </source>
</reference>
<reference key="7">
    <citation type="journal article" date="1993" name="Proc. Natl. Acad. Sci. U.S.A.">
        <title>TAP1 alleles in insulin-dependent diabetes mellitus: a newly defined centromeric boundary of disease susceptibility.</title>
        <authorList>
            <person name="Jackson D.G."/>
            <person name="Capra J.D."/>
        </authorList>
    </citation>
    <scope>NUCLEOTIDE SEQUENCE [MRNA]</scope>
    <scope>VARIANTS VAL-333; LEU-458; GLY-637 AND GLN-648</scope>
    <scope>POLYMORPHISM</scope>
    <source>
        <tissue>Blood</tissue>
    </source>
</reference>
<reference key="8">
    <citation type="journal article" date="1990" name="Nature">
        <title>A gene in the human major histocompatibility complex class II region controlling the class I antigen presentation pathway.</title>
        <authorList>
            <person name="Spies T."/>
            <person name="Bresnahan M."/>
            <person name="Bahram S."/>
            <person name="Arnold D."/>
            <person name="Blanck G."/>
            <person name="Mellins E."/>
            <person name="Pious D."/>
            <person name="Demars R."/>
        </authorList>
    </citation>
    <scope>NUCLEOTIDE SEQUENCE [MRNA] OF 123-552</scope>
</reference>
<reference key="9">
    <citation type="journal article" date="1994" name="Immunogenetics">
        <title>New allelic polymorphisms in TAP genes.</title>
        <authorList>
            <person name="Szafer F."/>
            <person name="Oksenberg J.R."/>
            <person name="Steinman L."/>
        </authorList>
    </citation>
    <scope>NUCLEOTIDE SEQUENCE [MRNA] OF 631-663</scope>
    <scope>VARIANTS GLY-637 AND GLN-648</scope>
    <scope>POLYMORPHISM</scope>
</reference>
<reference key="10">
    <citation type="journal article" date="1991" name="Proc. Natl. Acad. Sci. U.S.A.">
        <title>Two putative subunits of a peptide pump encoded in the human major histocompatibility complex class II region.</title>
        <authorList>
            <person name="Bahram S."/>
            <person name="Arnold D."/>
            <person name="Bresnahan M."/>
            <person name="Strominger J.L."/>
            <person name="Spies T."/>
        </authorList>
    </citation>
    <scope>INDUCTION BY IFNG</scope>
</reference>
<reference key="11">
    <citation type="journal article" date="1992" name="Nature">
        <title>Location of MHC-encoded transporters in the endoplasmic reticulum and cis-Golgi.</title>
        <authorList>
            <person name="Kleijmeer M.J."/>
            <person name="Kelly A."/>
            <person name="Geuze H.J."/>
            <person name="Slot J.W."/>
            <person name="Townsend A."/>
            <person name="Trowsdale J."/>
        </authorList>
    </citation>
    <scope>SUBCELLULAR LOCATION</scope>
</reference>
<reference key="12">
    <citation type="journal article" date="1992" name="Nature">
        <title>Assembly and function of the two ABC transporter proteins encoded in the human major histocompatibility complex.</title>
        <authorList>
            <person name="Kelly A."/>
            <person name="Powis S.H."/>
            <person name="Kerr L.A."/>
            <person name="Mockridge I."/>
            <person name="Elliott T."/>
            <person name="Bastin J."/>
            <person name="Uchanska-Ziegler B."/>
            <person name="Ziegler A."/>
            <person name="Trowsdale J."/>
            <person name="Townsend A."/>
        </authorList>
    </citation>
    <scope>FUNCTION</scope>
    <scope>INTERACTION WITH TAP2</scope>
</reference>
<reference key="13">
    <citation type="journal article" date="1995" name="J. Exp. Med.">
        <title>The peptide-binding motif for the human transporter associated with antigen processing.</title>
        <authorList>
            <person name="van Endert P.M."/>
            <person name="Riganelli D."/>
            <person name="Greco G."/>
            <person name="Fleischhauer K."/>
            <person name="Sidney J."/>
            <person name="Sette A."/>
            <person name="Bach J.F."/>
        </authorList>
    </citation>
    <scope>FUNCTION</scope>
</reference>
<reference key="14">
    <citation type="journal article" date="1995" name="Nature">
        <title>A viral inhibitor of peptide transporters for antigen presentation.</title>
        <authorList>
            <person name="Frueh K."/>
            <person name="Ahn K."/>
            <person name="Djaballah H."/>
            <person name="Sempe P."/>
            <person name="van Endert P.M."/>
            <person name="Tampe R."/>
            <person name="Peterson P.A."/>
            <person name="Yang Y."/>
        </authorList>
    </citation>
    <scope>INTERACTION WITH HERPES SIMPLEX VIRUS US12/ICP47 (MICROBIAL INFECTION)</scope>
</reference>
<reference key="15">
    <citation type="journal article" date="1996" name="Curr. Biol.">
        <title>Point mutations in the alpha 2 domain of HLA-A2.1 define a functionally relevant interaction with TAP.</title>
        <authorList>
            <person name="Lewis J.W."/>
            <person name="Neisig A."/>
            <person name="Neefjes J."/>
            <person name="Elliott T."/>
        </authorList>
    </citation>
    <scope>INTERACTION WITH HLA-A*02-B2M</scope>
</reference>
<reference key="16">
    <citation type="journal article" date="1996" name="EMBO J.">
        <title>Molecular mechanism and species specificity of TAP inhibition by herpes simplex virus ICP47.</title>
        <authorList>
            <person name="Ahn K."/>
            <person name="Meyer T.H."/>
            <person name="Uebel S."/>
            <person name="Sempe P."/>
            <person name="Djaballah H."/>
            <person name="Yang Y."/>
            <person name="Peterson P.A."/>
            <person name="Frueh K."/>
            <person name="Tampe R."/>
        </authorList>
    </citation>
    <scope>ACTIVITY REGULATION (MICROBIAL INFECTION)</scope>
    <scope>INHIBITION BY US12/ICP47</scope>
</reference>
<reference key="17">
    <citation type="journal article" date="1996" name="Immunity">
        <title>A point mutation in HLA-A*0201 results in failure to bind the TAP complex and to present virus-derived peptides to CTL.</title>
        <authorList>
            <person name="Peace-Brewer A.L."/>
            <person name="Tussey L.G."/>
            <person name="Matsui M."/>
            <person name="Li G."/>
            <person name="Quinn D.G."/>
            <person name="Frelinger J.A."/>
        </authorList>
    </citation>
    <scope>INTERACTION WITH HLA-A*02-B2M</scope>
</reference>
<reference key="18">
    <citation type="journal article" date="1996" name="J. Immunol.">
        <title>Multiple regions of the transporter associated with antigen processing (TAP) contribute to its peptide binding site.</title>
        <authorList>
            <person name="Nijenhuis M."/>
            <person name="Hammerling G.J."/>
        </authorList>
    </citation>
    <scope>PEPTIDE-BINDING SITE</scope>
</reference>
<reference key="19">
    <citation type="journal article" date="1997" name="Blood">
        <title>Downregulation of TAP1 in B lymphocytes by cellular and Epstein-Barr virus-encoded interleukin-10.</title>
        <authorList>
            <person name="Zeidler R."/>
            <person name="Eissner G."/>
            <person name="Meissner P."/>
            <person name="Uebel S."/>
            <person name="Tampe R."/>
            <person name="Lazis S."/>
            <person name="Hammerschmidt W."/>
        </authorList>
    </citation>
    <scope>TISSUE SPECIFICITY</scope>
    <scope>INDUCTION</scope>
    <scope>INDUCTION (MICROBIAL INFECTION)</scope>
</reference>
<reference key="20">
    <citation type="journal article" date="1997" name="Immunity">
        <title>The ER-luminal domain of the HCMV glycoprotein US6 inhibits peptide translocation by TAP.</title>
        <authorList>
            <person name="Ahn K."/>
            <person name="Gruhler A."/>
            <person name="Galocha B."/>
            <person name="Jones T.R."/>
            <person name="Wiertz E.J.H.J."/>
            <person name="Ploegh H.L."/>
            <person name="Peterson P.A."/>
            <person name="Yang Y."/>
            <person name="Frueh K."/>
        </authorList>
    </citation>
    <scope>ACTIVITY REGULATION (MICROBIAL INFECTION)</scope>
    <scope>INHIBITION BY US6 GLYCOPROTEIN</scope>
</reference>
<reference key="21">
    <citation type="journal article" date="1997" name="Proc. Natl. Acad. Sci. U.S.A.">
        <title>Recognition principle of the TAP transporter disclosed by combinatorial peptide libraries.</title>
        <authorList>
            <person name="Uebel S."/>
            <person name="Kraas W."/>
            <person name="Kienle S."/>
            <person name="Wiesmueller K.H."/>
            <person name="Jung G."/>
            <person name="Tampe R."/>
        </authorList>
    </citation>
    <scope>FUNCTION</scope>
</reference>
<reference key="22">
    <citation type="journal article" date="1998" name="Curr. Biol.">
        <title>TAP- and tapasin-dependent HLA-E surface expression correlates with the binding of an MHC class I leader peptide.</title>
        <authorList>
            <person name="Braud V.M."/>
            <person name="Allan D.S."/>
            <person name="Wilson D."/>
            <person name="McMichael A.J."/>
        </authorList>
    </citation>
    <scope>SUBUNIT</scope>
    <scope>INTERACTION WITH HLA-E-B2M</scope>
</reference>
<reference key="23">
    <citation type="journal article" date="1999" name="J. Immunol.">
        <title>Adenovirus E19 has two mechanisms for affecting class I MHC expression.</title>
        <authorList>
            <person name="Bennett E.M."/>
            <person name="Bennink J.R."/>
            <person name="Yewdell J.W."/>
            <person name="Brodsky F.M."/>
        </authorList>
    </citation>
    <scope>INTERACTION WITH ADENOVIRUS E3-19K GLYCOPROTEIN (MICROBIAL INFECTION)</scope>
</reference>
<reference key="24">
    <citation type="journal article" date="2000" name="J. Immunol.">
        <title>HLA-F is a predominantly empty, intracellular, TAP-associated MHC class Ib protein with a restricted expression pattern.</title>
        <authorList>
            <person name="Wainwright S.D."/>
            <person name="Biro P.A."/>
            <person name="Holmes C.H."/>
        </authorList>
    </citation>
    <scope>SUBUNIT</scope>
    <scope>INTERACTION WITH HLA-F</scope>
</reference>
<reference key="25">
    <citation type="journal article" date="2001" name="EMBO J.">
        <title>The human cytomegalovirus gene product US6 inhibits ATP binding by TAP.</title>
        <authorList>
            <person name="Hewitt E.W."/>
            <person name="Gupta S.S."/>
            <person name="Lehner P.J."/>
        </authorList>
    </citation>
    <scope>ACTIVITY REGULATION (MICROBIAL INFECTION)</scope>
    <scope>INHIBITION BY US6 GLYCOPROTEIN</scope>
</reference>
<reference key="26">
    <citation type="journal article" date="2001" name="Proc. Natl. Acad. Sci. U.S.A.">
        <title>Allosteric crosstalk between peptide-binding, transport, and ATP hydrolysis of the ABC transporter TAP.</title>
        <authorList>
            <person name="Gorbulev S."/>
            <person name="Abele R."/>
            <person name="Tampe R."/>
        </authorList>
    </citation>
    <scope>FUNCTION</scope>
    <scope>CATALYTIC ACTIVITY</scope>
    <scope>BIOPHYSICOCHEMICAL PROPERTIES</scope>
</reference>
<reference key="27">
    <citation type="journal article" date="2005" name="Mol. Immunol.">
        <title>Cytoplasmic domains of the transporter associated with antigen processing and P-glycoprotein interact with subunits of the proteasome.</title>
        <authorList>
            <person name="Begley G.S."/>
            <person name="Horvath A.R."/>
            <person name="Taylor J.C."/>
            <person name="Higgins C.F."/>
        </authorList>
    </citation>
    <scope>INTERACTION WITH PSMB5 AND PSMB8</scope>
</reference>
<reference key="28">
    <citation type="journal article" date="2009" name="J. Immunol.">
        <title>Specific targeting of the EBV lytic phase protein BNLF2a to the transporter associated with antigen processing results in impairment of HLA class I-restricted antigen presentation.</title>
        <authorList>
            <person name="Horst D."/>
            <person name="van Leeuwen D."/>
            <person name="Croft N.P."/>
            <person name="Garstka M.A."/>
            <person name="Hislop A.D."/>
            <person name="Kremmer E."/>
            <person name="Rickinson A.B."/>
            <person name="Wiertz E.J.H.J."/>
            <person name="Ressing M.E."/>
        </authorList>
    </citation>
    <scope>INTERACTION WITH EPSTEIN-VIRUS/EBV PROTEIN BNLF2A (MICROBIAL INFECTION)</scope>
</reference>
<reference key="29">
    <citation type="journal article" date="2011" name="BMC Syst. Biol.">
        <title>Initial characterization of the human central proteome.</title>
        <authorList>
            <person name="Burkard T.R."/>
            <person name="Planyavsky M."/>
            <person name="Kaupe I."/>
            <person name="Breitwieser F.P."/>
            <person name="Buerckstuemmer T."/>
            <person name="Bennett K.L."/>
            <person name="Superti-Furga G."/>
            <person name="Colinge J."/>
        </authorList>
    </citation>
    <scope>IDENTIFICATION BY MASS SPECTROMETRY [LARGE SCALE ANALYSIS]</scope>
</reference>
<reference key="30">
    <citation type="journal article" date="2012" name="Cell. Mol. Life Sci.">
        <title>Direct evidence that the N-terminal extensions of the TAP complex act as autonomous interaction scaffolds for the assembly of the MHC I peptide-loading complex.</title>
        <authorList>
            <person name="Hulpke S."/>
            <person name="Tomioka M."/>
            <person name="Kremmer E."/>
            <person name="Ueda K."/>
            <person name="Abele R."/>
            <person name="Tampe R."/>
        </authorList>
    </citation>
    <scope>SUBCELLULAR LOCATION</scope>
    <scope>INTERACTION WITH TAPBP</scope>
</reference>
<reference key="31">
    <citation type="journal article" date="2014" name="Nat. Commun.">
        <title>Mechanistic determinants of the directionality and energetics of active export by a heterodimeric ABC transporter.</title>
        <authorList>
            <person name="Grossmann N."/>
            <person name="Vakkasoglu A.S."/>
            <person name="Hulpke S."/>
            <person name="Abele R."/>
            <person name="Gaudet R."/>
            <person name="Tampe R."/>
        </authorList>
    </citation>
    <scope>FUNCTION</scope>
    <scope>CATALYTIC ACTIVITY</scope>
    <scope>BIOPHYSICOCHEMICAL PROPERTIES</scope>
    <scope>COFACTOR</scope>
    <scope>ACTIVITY REGULATION</scope>
    <scope>MUTAGENESIS OF ASP-674</scope>
</reference>
<reference key="32">
    <citation type="journal article" date="2015" name="Nat. Commun.">
        <title>Ultrasensitive quantification of TAP-dependent antigen compartmentalization in scarce primary immune cell subsets.</title>
        <authorList>
            <person name="Fischbach H."/>
            <person name="Doering M."/>
            <person name="Nikles D."/>
            <person name="Lehnert E."/>
            <person name="Baldauf C."/>
            <person name="Kalinke U."/>
            <person name="Tampe R."/>
        </authorList>
    </citation>
    <scope>FUNCTION</scope>
    <scope>CATALYTIC ACTIVITY</scope>
    <scope>TISSUE SPECIFICITY</scope>
    <scope>ACTIVITY REGULATION (MICROBIAL INFECTION)</scope>
</reference>
<reference key="33">
    <citation type="journal article" date="2015" name="Proteomics">
        <title>N-terminome analysis of the human mitochondrial proteome.</title>
        <authorList>
            <person name="Vaca Jacome A.S."/>
            <person name="Rabilloud T."/>
            <person name="Schaeffer-Reiss C."/>
            <person name="Rompais M."/>
            <person name="Ayoub D."/>
            <person name="Lane L."/>
            <person name="Bairoch A."/>
            <person name="Van Dorsselaer A."/>
            <person name="Carapito C."/>
        </authorList>
    </citation>
    <scope>IDENTIFICATION BY MASS SPECTROMETRY [LARGE SCALE ANALYSIS]</scope>
</reference>
<reference key="34">
    <citation type="journal article" date="2015" name="Sci. Rep.">
        <title>Assembly of the MHC I peptide-loading complex determined by a conserved ionic lock-switch.</title>
        <authorList>
            <person name="Blees A."/>
            <person name="Reichel K."/>
            <person name="Trowitzsch S."/>
            <person name="Fisette O."/>
            <person name="Bock C."/>
            <person name="Abele R."/>
            <person name="Hummer G."/>
            <person name="Schaefer L.V."/>
            <person name="Tampe R."/>
        </authorList>
    </citation>
    <scope>FUNCTION</scope>
    <scope>SUBUNIT</scope>
    <scope>INTERACTION WITH TAPBP</scope>
    <scope>SITE</scope>
    <scope>MUTAGENESIS OF ASP-32</scope>
</reference>
<reference key="35">
    <citation type="journal article" date="2001" name="EMBO J.">
        <title>Structure of the ABC ATPase domain of human TAP1, the transporter associated with antigen processing.</title>
        <authorList>
            <person name="Gaudet R."/>
            <person name="Wiley D.C."/>
        </authorList>
    </citation>
    <scope>X-RAY CRYSTALLOGRAPHY (2.4 ANGSTROMS) OF 489-748 IN COMPLEX WITH ADP AND MAGNESIUM</scope>
    <scope>COFACTOR</scope>
</reference>
<reference key="36">
    <citation type="journal article" date="1992" name="Proc. Natl. Acad. Sci. U.S.A.">
        <title>Allelic variants of the human putative peptide transporter involved in antigen processing.</title>
        <authorList>
            <person name="Colonna M."/>
            <person name="Bresnahan M."/>
            <person name="Bahram S."/>
            <person name="Strominger J.L."/>
            <person name="Spies T."/>
        </authorList>
    </citation>
    <scope>VARIANTS VAL-333 AND GLY-637</scope>
    <scope>POLYMORPHISM</scope>
</reference>
<reference key="37">
    <citation type="journal article" date="1996" name="Nat. Genet.">
        <title>A functionally defective allele of TAP1 results in loss of MHC class I antigen presentation in a human lung cancer.</title>
        <authorList>
            <person name="Chen H.L."/>
            <person name="Gabrilovich D."/>
            <person name="Tampe R."/>
            <person name="Girgis K.R."/>
            <person name="Nadaf S."/>
            <person name="Carbone D.P."/>
        </authorList>
    </citation>
    <scope>VARIANT GLN-659</scope>
</reference>
<reference key="38">
    <citation type="journal article" date="1999" name="J. Clin. Invest.">
        <title>Splice acceptor site mutation of the transporter associated with antigen processing-1 gene in human bare lymphocyte syndrome.</title>
        <authorList>
            <person name="Furukawa H."/>
            <person name="Murata S."/>
            <person name="Yabe T."/>
            <person name="Shimbara N."/>
            <person name="Keicho N."/>
            <person name="Kashiwase K."/>
            <person name="Watanabe K."/>
            <person name="Ishikawa Y."/>
            <person name="Akaza T."/>
            <person name="Tadokoro K."/>
            <person name="Tohma S."/>
            <person name="Inoue T."/>
            <person name="Tokunaga K."/>
            <person name="Yamamoto K."/>
            <person name="Tanaka K."/>
            <person name="Juji T."/>
        </authorList>
    </citation>
    <scope>INVOLVEMENT IN MHC1D1</scope>
</reference>
<reference key="39">
    <citation type="journal article" date="2001" name="Hum. Immunol.">
        <title>TAP1 polymorphisms in several human ethnic groups: characteristics, evolution, and genotyping strategies.</title>
        <authorList>
            <person name="Tang J."/>
            <person name="Freedman D.O."/>
            <person name="Allen S."/>
            <person name="Karita E."/>
            <person name="Musonda R."/>
            <person name="Braga C."/>
            <person name="Margolick J."/>
            <person name="Kaslow R.A."/>
        </authorList>
    </citation>
    <scope>VARIANTS VAL-333; VAL-370; LEU-458; ILE-518; GLY-637 AND GLN-648</scope>
    <scope>POLYMORPHISM</scope>
</reference>
<reference key="40">
    <citation type="journal article" date="2003" name="Hum. Immunol.">
        <title>Novel TAP1 polymorphisms in indigenous Zimbabweans: their potential implications on TAP function and in human diseases.</title>
        <authorList>
            <person name="Lajoie J."/>
            <person name="Zijenah L.S."/>
            <person name="Faucher M.C."/>
            <person name="Ward B.J."/>
            <person name="Roger M."/>
        </authorList>
    </citation>
    <scope>VARIANTS SER-7; ARG-17; VAL-333; VAL-370; CYS-419; LEU-458; GLY-637 AND GLN-648</scope>
    <scope>POLYMORPHISM</scope>
</reference>